<name>METK_MYCBO</name>
<evidence type="ECO:0000255" key="1">
    <source>
        <dbReference type="HAMAP-Rule" id="MF_00086"/>
    </source>
</evidence>
<protein>
    <recommendedName>
        <fullName evidence="1">S-adenosylmethionine synthase</fullName>
        <shortName evidence="1">AdoMet synthase</shortName>
        <ecNumber evidence="1">2.5.1.6</ecNumber>
    </recommendedName>
    <alternativeName>
        <fullName evidence="1">MAT</fullName>
    </alternativeName>
    <alternativeName>
        <fullName evidence="1">Methionine adenosyltransferase</fullName>
    </alternativeName>
</protein>
<gene>
    <name evidence="1" type="primary">metK</name>
    <name type="ordered locus">BQ2027_MB1427</name>
</gene>
<proteinExistence type="inferred from homology"/>
<comment type="function">
    <text evidence="1">Catalyzes the formation of S-adenosylmethionine (AdoMet) from methionine and ATP. The overall synthetic reaction is composed of two sequential steps, AdoMet formation and the subsequent tripolyphosphate hydrolysis which occurs prior to release of AdoMet from the enzyme.</text>
</comment>
<comment type="catalytic activity">
    <reaction evidence="1">
        <text>L-methionine + ATP + H2O = S-adenosyl-L-methionine + phosphate + diphosphate</text>
        <dbReference type="Rhea" id="RHEA:21080"/>
        <dbReference type="ChEBI" id="CHEBI:15377"/>
        <dbReference type="ChEBI" id="CHEBI:30616"/>
        <dbReference type="ChEBI" id="CHEBI:33019"/>
        <dbReference type="ChEBI" id="CHEBI:43474"/>
        <dbReference type="ChEBI" id="CHEBI:57844"/>
        <dbReference type="ChEBI" id="CHEBI:59789"/>
        <dbReference type="EC" id="2.5.1.6"/>
    </reaction>
</comment>
<comment type="cofactor">
    <cofactor evidence="1">
        <name>Mg(2+)</name>
        <dbReference type="ChEBI" id="CHEBI:18420"/>
    </cofactor>
    <text evidence="1">Binds 2 divalent ions per subunit.</text>
</comment>
<comment type="cofactor">
    <cofactor evidence="1">
        <name>K(+)</name>
        <dbReference type="ChEBI" id="CHEBI:29103"/>
    </cofactor>
    <text evidence="1">Binds 1 potassium ion per subunit.</text>
</comment>
<comment type="pathway">
    <text evidence="1">Amino-acid biosynthesis; S-adenosyl-L-methionine biosynthesis; S-adenosyl-L-methionine from L-methionine: step 1/1.</text>
</comment>
<comment type="subunit">
    <text evidence="1">Homotetramer; dimer of dimers.</text>
</comment>
<comment type="subcellular location">
    <subcellularLocation>
        <location evidence="1">Cytoplasm</location>
    </subcellularLocation>
</comment>
<comment type="similarity">
    <text evidence="1">Belongs to the AdoMet synthase family.</text>
</comment>
<sequence>MSEKGRLFTSESVTEGHPDKICDAISDSVLDALLAADPRSRVAVETLVTTGQVHVVGEVATSAKEAFADITNTVRARILEIGYDSSDKGFDGATCGVNIGIGAQSPDIAQGVDTAHEARVEGAADPLDSQGAGDQGLMFGYAINATPELMPLPIALAHRLSRRLTEVRKNGVLPYLRPDGKTQVTIAYEDNVPVRLDTVVISTQHAADIDLEKTLDPDIREKVLNTVLDDLAHETLDASTVRVLVNPTGKFVLGGPMGDAGLTGRKIIVDTYGGWARHGGGAFSGKDPSKVDRSAAYAMRWVAKNVVAAGLAERVEVQVAYAIGKAAPVGLFVETFGTETEDPVKIEKAIGEVFDLRPGAIIRDLNLLRPIYAPTAAYGHFGRTDVELPWEQLDKVDDLKRAI</sequence>
<dbReference type="EC" id="2.5.1.6" evidence="1"/>
<dbReference type="EMBL" id="LT708304">
    <property type="protein sequence ID" value="SIU00030.1"/>
    <property type="molecule type" value="Genomic_DNA"/>
</dbReference>
<dbReference type="RefSeq" id="NP_855079.1">
    <property type="nucleotide sequence ID" value="NC_002945.3"/>
</dbReference>
<dbReference type="RefSeq" id="WP_010950540.1">
    <property type="nucleotide sequence ID" value="NC_002945.4"/>
</dbReference>
<dbReference type="SMR" id="Q7U051"/>
<dbReference type="KEGG" id="mbo:BQ2027_MB1427"/>
<dbReference type="PATRIC" id="fig|233413.5.peg.1562"/>
<dbReference type="UniPathway" id="UPA00315">
    <property type="reaction ID" value="UER00080"/>
</dbReference>
<dbReference type="Proteomes" id="UP000001419">
    <property type="component" value="Chromosome"/>
</dbReference>
<dbReference type="GO" id="GO:0005737">
    <property type="term" value="C:cytoplasm"/>
    <property type="evidence" value="ECO:0007669"/>
    <property type="project" value="UniProtKB-SubCell"/>
</dbReference>
<dbReference type="GO" id="GO:0005524">
    <property type="term" value="F:ATP binding"/>
    <property type="evidence" value="ECO:0007669"/>
    <property type="project" value="UniProtKB-UniRule"/>
</dbReference>
<dbReference type="GO" id="GO:0000287">
    <property type="term" value="F:magnesium ion binding"/>
    <property type="evidence" value="ECO:0007669"/>
    <property type="project" value="UniProtKB-UniRule"/>
</dbReference>
<dbReference type="GO" id="GO:0004478">
    <property type="term" value="F:methionine adenosyltransferase activity"/>
    <property type="evidence" value="ECO:0007669"/>
    <property type="project" value="UniProtKB-UniRule"/>
</dbReference>
<dbReference type="GO" id="GO:0006730">
    <property type="term" value="P:one-carbon metabolic process"/>
    <property type="evidence" value="ECO:0007669"/>
    <property type="project" value="UniProtKB-KW"/>
</dbReference>
<dbReference type="GO" id="GO:0006556">
    <property type="term" value="P:S-adenosylmethionine biosynthetic process"/>
    <property type="evidence" value="ECO:0007669"/>
    <property type="project" value="UniProtKB-UniRule"/>
</dbReference>
<dbReference type="CDD" id="cd18079">
    <property type="entry name" value="S-AdoMet_synt"/>
    <property type="match status" value="1"/>
</dbReference>
<dbReference type="FunFam" id="3.30.300.10:FF:000006">
    <property type="entry name" value="S-adenosylmethionine synthase"/>
    <property type="match status" value="1"/>
</dbReference>
<dbReference type="Gene3D" id="3.30.300.10">
    <property type="match status" value="3"/>
</dbReference>
<dbReference type="HAMAP" id="MF_00086">
    <property type="entry name" value="S_AdoMet_synth1"/>
    <property type="match status" value="1"/>
</dbReference>
<dbReference type="InterPro" id="IPR022631">
    <property type="entry name" value="ADOMET_SYNTHASE_CS"/>
</dbReference>
<dbReference type="InterPro" id="IPR022630">
    <property type="entry name" value="S-AdoMet_synt_C"/>
</dbReference>
<dbReference type="InterPro" id="IPR022629">
    <property type="entry name" value="S-AdoMet_synt_central"/>
</dbReference>
<dbReference type="InterPro" id="IPR022628">
    <property type="entry name" value="S-AdoMet_synt_N"/>
</dbReference>
<dbReference type="InterPro" id="IPR002133">
    <property type="entry name" value="S-AdoMet_synthetase"/>
</dbReference>
<dbReference type="InterPro" id="IPR022636">
    <property type="entry name" value="S-AdoMet_synthetase_sfam"/>
</dbReference>
<dbReference type="NCBIfam" id="TIGR01034">
    <property type="entry name" value="metK"/>
    <property type="match status" value="1"/>
</dbReference>
<dbReference type="PANTHER" id="PTHR11964">
    <property type="entry name" value="S-ADENOSYLMETHIONINE SYNTHETASE"/>
    <property type="match status" value="1"/>
</dbReference>
<dbReference type="Pfam" id="PF02773">
    <property type="entry name" value="S-AdoMet_synt_C"/>
    <property type="match status" value="1"/>
</dbReference>
<dbReference type="Pfam" id="PF02772">
    <property type="entry name" value="S-AdoMet_synt_M"/>
    <property type="match status" value="1"/>
</dbReference>
<dbReference type="Pfam" id="PF00438">
    <property type="entry name" value="S-AdoMet_synt_N"/>
    <property type="match status" value="1"/>
</dbReference>
<dbReference type="PIRSF" id="PIRSF000497">
    <property type="entry name" value="MAT"/>
    <property type="match status" value="1"/>
</dbReference>
<dbReference type="SUPFAM" id="SSF55973">
    <property type="entry name" value="S-adenosylmethionine synthetase"/>
    <property type="match status" value="3"/>
</dbReference>
<dbReference type="PROSITE" id="PS00376">
    <property type="entry name" value="ADOMET_SYNTHASE_1"/>
    <property type="match status" value="1"/>
</dbReference>
<dbReference type="PROSITE" id="PS00377">
    <property type="entry name" value="ADOMET_SYNTHASE_2"/>
    <property type="match status" value="1"/>
</dbReference>
<keyword id="KW-0067">ATP-binding</keyword>
<keyword id="KW-0963">Cytoplasm</keyword>
<keyword id="KW-0460">Magnesium</keyword>
<keyword id="KW-0479">Metal-binding</keyword>
<keyword id="KW-0547">Nucleotide-binding</keyword>
<keyword id="KW-0554">One-carbon metabolism</keyword>
<keyword id="KW-0630">Potassium</keyword>
<keyword id="KW-1185">Reference proteome</keyword>
<keyword id="KW-0808">Transferase</keyword>
<organism>
    <name type="scientific">Mycobacterium bovis (strain ATCC BAA-935 / AF2122/97)</name>
    <dbReference type="NCBI Taxonomy" id="233413"/>
    <lineage>
        <taxon>Bacteria</taxon>
        <taxon>Bacillati</taxon>
        <taxon>Actinomycetota</taxon>
        <taxon>Actinomycetes</taxon>
        <taxon>Mycobacteriales</taxon>
        <taxon>Mycobacteriaceae</taxon>
        <taxon>Mycobacterium</taxon>
        <taxon>Mycobacterium tuberculosis complex</taxon>
    </lineage>
</organism>
<feature type="chain" id="PRO_0000174549" description="S-adenosylmethionine synthase">
    <location>
        <begin position="1"/>
        <end position="403"/>
    </location>
</feature>
<feature type="region of interest" description="Flexible loop" evidence="1">
    <location>
        <begin position="104"/>
        <end position="114"/>
    </location>
</feature>
<feature type="binding site" description="in other chain" evidence="1">
    <location>
        <position position="17"/>
    </location>
    <ligand>
        <name>ATP</name>
        <dbReference type="ChEBI" id="CHEBI:30616"/>
        <note>ligand shared between two neighboring subunits</note>
    </ligand>
</feature>
<feature type="binding site" evidence="1">
    <location>
        <position position="19"/>
    </location>
    <ligand>
        <name>Mg(2+)</name>
        <dbReference type="ChEBI" id="CHEBI:18420"/>
    </ligand>
</feature>
<feature type="binding site" evidence="1">
    <location>
        <position position="45"/>
    </location>
    <ligand>
        <name>K(+)</name>
        <dbReference type="ChEBI" id="CHEBI:29103"/>
    </ligand>
</feature>
<feature type="binding site" description="in other chain" evidence="1">
    <location>
        <position position="58"/>
    </location>
    <ligand>
        <name>L-methionine</name>
        <dbReference type="ChEBI" id="CHEBI:57844"/>
        <note>ligand shared between two neighboring subunits</note>
    </ligand>
</feature>
<feature type="binding site" description="in other chain" evidence="1">
    <location>
        <position position="104"/>
    </location>
    <ligand>
        <name>L-methionine</name>
        <dbReference type="ChEBI" id="CHEBI:57844"/>
        <note>ligand shared between two neighboring subunits</note>
    </ligand>
</feature>
<feature type="binding site" description="in other chain" evidence="1">
    <location>
        <begin position="179"/>
        <end position="181"/>
    </location>
    <ligand>
        <name>ATP</name>
        <dbReference type="ChEBI" id="CHEBI:30616"/>
        <note>ligand shared between two neighboring subunits</note>
    </ligand>
</feature>
<feature type="binding site" description="in other chain" evidence="1">
    <location>
        <begin position="250"/>
        <end position="251"/>
    </location>
    <ligand>
        <name>ATP</name>
        <dbReference type="ChEBI" id="CHEBI:30616"/>
        <note>ligand shared between two neighboring subunits</note>
    </ligand>
</feature>
<feature type="binding site" evidence="1">
    <location>
        <position position="259"/>
    </location>
    <ligand>
        <name>ATP</name>
        <dbReference type="ChEBI" id="CHEBI:30616"/>
        <note>ligand shared between two neighboring subunits</note>
    </ligand>
</feature>
<feature type="binding site" evidence="1">
    <location>
        <position position="259"/>
    </location>
    <ligand>
        <name>L-methionine</name>
        <dbReference type="ChEBI" id="CHEBI:57844"/>
        <note>ligand shared between two neighboring subunits</note>
    </ligand>
</feature>
<feature type="binding site" description="in other chain" evidence="1">
    <location>
        <begin position="265"/>
        <end position="266"/>
    </location>
    <ligand>
        <name>ATP</name>
        <dbReference type="ChEBI" id="CHEBI:30616"/>
        <note>ligand shared between two neighboring subunits</note>
    </ligand>
</feature>
<feature type="binding site" evidence="1">
    <location>
        <position position="282"/>
    </location>
    <ligand>
        <name>ATP</name>
        <dbReference type="ChEBI" id="CHEBI:30616"/>
        <note>ligand shared between two neighboring subunits</note>
    </ligand>
</feature>
<feature type="binding site" evidence="1">
    <location>
        <position position="286"/>
    </location>
    <ligand>
        <name>ATP</name>
        <dbReference type="ChEBI" id="CHEBI:30616"/>
        <note>ligand shared between two neighboring subunits</note>
    </ligand>
</feature>
<feature type="binding site" description="in other chain" evidence="1">
    <location>
        <position position="290"/>
    </location>
    <ligand>
        <name>L-methionine</name>
        <dbReference type="ChEBI" id="CHEBI:57844"/>
        <note>ligand shared between two neighboring subunits</note>
    </ligand>
</feature>
<reference key="1">
    <citation type="journal article" date="2003" name="Proc. Natl. Acad. Sci. U.S.A.">
        <title>The complete genome sequence of Mycobacterium bovis.</title>
        <authorList>
            <person name="Garnier T."/>
            <person name="Eiglmeier K."/>
            <person name="Camus J.-C."/>
            <person name="Medina N."/>
            <person name="Mansoor H."/>
            <person name="Pryor M."/>
            <person name="Duthoy S."/>
            <person name="Grondin S."/>
            <person name="Lacroix C."/>
            <person name="Monsempe C."/>
            <person name="Simon S."/>
            <person name="Harris B."/>
            <person name="Atkin R."/>
            <person name="Doggett J."/>
            <person name="Mayes R."/>
            <person name="Keating L."/>
            <person name="Wheeler P.R."/>
            <person name="Parkhill J."/>
            <person name="Barrell B.G."/>
            <person name="Cole S.T."/>
            <person name="Gordon S.V."/>
            <person name="Hewinson R.G."/>
        </authorList>
    </citation>
    <scope>NUCLEOTIDE SEQUENCE [LARGE SCALE GENOMIC DNA]</scope>
    <source>
        <strain>ATCC BAA-935 / AF2122/97</strain>
    </source>
</reference>
<reference key="2">
    <citation type="journal article" date="2017" name="Genome Announc.">
        <title>Updated reference genome sequence and annotation of Mycobacterium bovis AF2122/97.</title>
        <authorList>
            <person name="Malone K.M."/>
            <person name="Farrell D."/>
            <person name="Stuber T.P."/>
            <person name="Schubert O.T."/>
            <person name="Aebersold R."/>
            <person name="Robbe-Austerman S."/>
            <person name="Gordon S.V."/>
        </authorList>
    </citation>
    <scope>NUCLEOTIDE SEQUENCE [LARGE SCALE GENOMIC DNA]</scope>
    <scope>GENOME REANNOTATION</scope>
    <source>
        <strain>ATCC BAA-935 / AF2122/97</strain>
    </source>
</reference>
<accession>Q7U051</accession>
<accession>A0A1R3XY89</accession>
<accession>X2BI76</accession>